<proteinExistence type="inferred from homology"/>
<sequence length="537" mass="59906">MTKYIFVTGGVVSSIGKGIVAASLGRLLKNRGLKVTIQKFDPYINIDPGTMSPYQHGEVYVTDDGAETDLDLGHYERFIDINLNKYSNVTTGKIYSEVLRKERKGEYLGATVQVIPHITDALKEKIKRAATTTDSDVIITEVGGTVGDIESLPFLEALRQMKADVGSENVMYIHTTLLPYLKAAGEMKTKPTQHSVKELRGLGIQPNMLVIRTEEPVEQGIKNKLAQFCDVNPEAVIESRDVEHLYQIPLNLQAQSMDQIVCDHLKLDVPQADMTEWSAMVDKVMNLKKTTRIALVGKYVELPDAYLSVVEALKHSGYANDAAIELDWINANDLTAENAKKLLGQADGIIVPGGFGQRGTEGKIQAIRYAREHDVPMLGICLGMQLTCVEFARHVLGMEKANSFELDPDTAYPIIDIMRDQIDIEDMGGTLRLGLYPCKLKAGSRAAAAYNNQEVVQRRHRHRYEFNNKFRQDFEAAGFVFSGVSPDNRLVEIVELPEKKFFVAAQYHPELQSRPNRPEELYTAFVTAAVKNKNQSL</sequence>
<protein>
    <recommendedName>
        <fullName evidence="1">CTP synthase</fullName>
        <ecNumber evidence="1">6.3.4.2</ecNumber>
    </recommendedName>
    <alternativeName>
        <fullName evidence="1">Cytidine 5'-triphosphate synthase</fullName>
    </alternativeName>
    <alternativeName>
        <fullName evidence="1">Cytidine triphosphate synthetase</fullName>
        <shortName evidence="1">CTP synthetase</shortName>
        <shortName evidence="1">CTPS</shortName>
    </alternativeName>
    <alternativeName>
        <fullName evidence="1">UTP--ammonia ligase</fullName>
    </alternativeName>
</protein>
<reference key="1">
    <citation type="journal article" date="2009" name="PLoS Pathog.">
        <title>Genomic evidence for the evolution of Streptococcus equi: host restriction, increased virulence, and genetic exchange with human pathogens.</title>
        <authorList>
            <person name="Holden M.T.G."/>
            <person name="Heather Z."/>
            <person name="Paillot R."/>
            <person name="Steward K.F."/>
            <person name="Webb K."/>
            <person name="Ainslie F."/>
            <person name="Jourdan T."/>
            <person name="Bason N.C."/>
            <person name="Holroyd N.E."/>
            <person name="Mungall K."/>
            <person name="Quail M.A."/>
            <person name="Sanders M."/>
            <person name="Simmonds M."/>
            <person name="Willey D."/>
            <person name="Brooks K."/>
            <person name="Aanensen D.M."/>
            <person name="Spratt B.G."/>
            <person name="Jolley K.A."/>
            <person name="Maiden M.C.J."/>
            <person name="Kehoe M."/>
            <person name="Chanter N."/>
            <person name="Bentley S.D."/>
            <person name="Robinson C."/>
            <person name="Maskell D.J."/>
            <person name="Parkhill J."/>
            <person name="Waller A.S."/>
        </authorList>
    </citation>
    <scope>NUCLEOTIDE SEQUENCE [LARGE SCALE GENOMIC DNA]</scope>
    <source>
        <strain>H70</strain>
    </source>
</reference>
<comment type="function">
    <text evidence="1">Catalyzes the ATP-dependent amination of UTP to CTP with either L-glutamine or ammonia as the source of nitrogen. Regulates intracellular CTP levels through interactions with the four ribonucleotide triphosphates.</text>
</comment>
<comment type="catalytic activity">
    <reaction evidence="1">
        <text>UTP + L-glutamine + ATP + H2O = CTP + L-glutamate + ADP + phosphate + 2 H(+)</text>
        <dbReference type="Rhea" id="RHEA:26426"/>
        <dbReference type="ChEBI" id="CHEBI:15377"/>
        <dbReference type="ChEBI" id="CHEBI:15378"/>
        <dbReference type="ChEBI" id="CHEBI:29985"/>
        <dbReference type="ChEBI" id="CHEBI:30616"/>
        <dbReference type="ChEBI" id="CHEBI:37563"/>
        <dbReference type="ChEBI" id="CHEBI:43474"/>
        <dbReference type="ChEBI" id="CHEBI:46398"/>
        <dbReference type="ChEBI" id="CHEBI:58359"/>
        <dbReference type="ChEBI" id="CHEBI:456216"/>
        <dbReference type="EC" id="6.3.4.2"/>
    </reaction>
</comment>
<comment type="catalytic activity">
    <reaction evidence="1">
        <text>L-glutamine + H2O = L-glutamate + NH4(+)</text>
        <dbReference type="Rhea" id="RHEA:15889"/>
        <dbReference type="ChEBI" id="CHEBI:15377"/>
        <dbReference type="ChEBI" id="CHEBI:28938"/>
        <dbReference type="ChEBI" id="CHEBI:29985"/>
        <dbReference type="ChEBI" id="CHEBI:58359"/>
    </reaction>
</comment>
<comment type="catalytic activity">
    <reaction evidence="1">
        <text>UTP + NH4(+) + ATP = CTP + ADP + phosphate + 2 H(+)</text>
        <dbReference type="Rhea" id="RHEA:16597"/>
        <dbReference type="ChEBI" id="CHEBI:15378"/>
        <dbReference type="ChEBI" id="CHEBI:28938"/>
        <dbReference type="ChEBI" id="CHEBI:30616"/>
        <dbReference type="ChEBI" id="CHEBI:37563"/>
        <dbReference type="ChEBI" id="CHEBI:43474"/>
        <dbReference type="ChEBI" id="CHEBI:46398"/>
        <dbReference type="ChEBI" id="CHEBI:456216"/>
    </reaction>
</comment>
<comment type="activity regulation">
    <text evidence="1">Allosterically activated by GTP, when glutamine is the substrate; GTP has no effect on the reaction when ammonia is the substrate. The allosteric effector GTP functions by stabilizing the protein conformation that binds the tetrahedral intermediate(s) formed during glutamine hydrolysis. Inhibited by the product CTP, via allosteric rather than competitive inhibition.</text>
</comment>
<comment type="pathway">
    <text evidence="1">Pyrimidine metabolism; CTP biosynthesis via de novo pathway; CTP from UDP: step 2/2.</text>
</comment>
<comment type="subunit">
    <text evidence="1">Homotetramer.</text>
</comment>
<comment type="miscellaneous">
    <text evidence="1">CTPSs have evolved a hybrid strategy for distinguishing between UTP and CTP. The overlapping regions of the product feedback inhibitory and substrate sites recognize a common feature in both compounds, the triphosphate moiety. To differentiate isosteric substrate and product pyrimidine rings, an additional pocket far from the expected kinase/ligase catalytic site, specifically recognizes the cytosine and ribose portions of the product inhibitor.</text>
</comment>
<comment type="similarity">
    <text evidence="1">Belongs to the CTP synthase family.</text>
</comment>
<dbReference type="EC" id="6.3.4.2" evidence="1"/>
<dbReference type="EMBL" id="FM204884">
    <property type="protein sequence ID" value="CAW98016.1"/>
    <property type="molecule type" value="Genomic_DNA"/>
</dbReference>
<dbReference type="SMR" id="C0MFQ9"/>
<dbReference type="MEROPS" id="C26.964"/>
<dbReference type="KEGG" id="seq:SZO_02530"/>
<dbReference type="eggNOG" id="COG0504">
    <property type="taxonomic scope" value="Bacteria"/>
</dbReference>
<dbReference type="HOGENOM" id="CLU_011675_5_0_9"/>
<dbReference type="UniPathway" id="UPA00159">
    <property type="reaction ID" value="UER00277"/>
</dbReference>
<dbReference type="Proteomes" id="UP000001368">
    <property type="component" value="Chromosome"/>
</dbReference>
<dbReference type="GO" id="GO:0005829">
    <property type="term" value="C:cytosol"/>
    <property type="evidence" value="ECO:0007669"/>
    <property type="project" value="TreeGrafter"/>
</dbReference>
<dbReference type="GO" id="GO:0005524">
    <property type="term" value="F:ATP binding"/>
    <property type="evidence" value="ECO:0007669"/>
    <property type="project" value="UniProtKB-KW"/>
</dbReference>
<dbReference type="GO" id="GO:0003883">
    <property type="term" value="F:CTP synthase activity"/>
    <property type="evidence" value="ECO:0007669"/>
    <property type="project" value="UniProtKB-UniRule"/>
</dbReference>
<dbReference type="GO" id="GO:0004359">
    <property type="term" value="F:glutaminase activity"/>
    <property type="evidence" value="ECO:0007669"/>
    <property type="project" value="RHEA"/>
</dbReference>
<dbReference type="GO" id="GO:0042802">
    <property type="term" value="F:identical protein binding"/>
    <property type="evidence" value="ECO:0007669"/>
    <property type="project" value="TreeGrafter"/>
</dbReference>
<dbReference type="GO" id="GO:0046872">
    <property type="term" value="F:metal ion binding"/>
    <property type="evidence" value="ECO:0007669"/>
    <property type="project" value="UniProtKB-KW"/>
</dbReference>
<dbReference type="GO" id="GO:0044210">
    <property type="term" value="P:'de novo' CTP biosynthetic process"/>
    <property type="evidence" value="ECO:0007669"/>
    <property type="project" value="UniProtKB-UniRule"/>
</dbReference>
<dbReference type="GO" id="GO:0019856">
    <property type="term" value="P:pyrimidine nucleobase biosynthetic process"/>
    <property type="evidence" value="ECO:0007669"/>
    <property type="project" value="TreeGrafter"/>
</dbReference>
<dbReference type="CDD" id="cd03113">
    <property type="entry name" value="CTPS_N"/>
    <property type="match status" value="1"/>
</dbReference>
<dbReference type="CDD" id="cd01746">
    <property type="entry name" value="GATase1_CTP_Synthase"/>
    <property type="match status" value="1"/>
</dbReference>
<dbReference type="FunFam" id="3.40.50.300:FF:000009">
    <property type="entry name" value="CTP synthase"/>
    <property type="match status" value="1"/>
</dbReference>
<dbReference type="FunFam" id="3.40.50.880:FF:000002">
    <property type="entry name" value="CTP synthase"/>
    <property type="match status" value="1"/>
</dbReference>
<dbReference type="Gene3D" id="3.40.50.880">
    <property type="match status" value="1"/>
</dbReference>
<dbReference type="Gene3D" id="3.40.50.300">
    <property type="entry name" value="P-loop containing nucleotide triphosphate hydrolases"/>
    <property type="match status" value="1"/>
</dbReference>
<dbReference type="HAMAP" id="MF_01227">
    <property type="entry name" value="PyrG"/>
    <property type="match status" value="1"/>
</dbReference>
<dbReference type="InterPro" id="IPR029062">
    <property type="entry name" value="Class_I_gatase-like"/>
</dbReference>
<dbReference type="InterPro" id="IPR004468">
    <property type="entry name" value="CTP_synthase"/>
</dbReference>
<dbReference type="InterPro" id="IPR017456">
    <property type="entry name" value="CTP_synthase_N"/>
</dbReference>
<dbReference type="InterPro" id="IPR017926">
    <property type="entry name" value="GATASE"/>
</dbReference>
<dbReference type="InterPro" id="IPR033828">
    <property type="entry name" value="GATase1_CTP_Synthase"/>
</dbReference>
<dbReference type="InterPro" id="IPR027417">
    <property type="entry name" value="P-loop_NTPase"/>
</dbReference>
<dbReference type="NCBIfam" id="NF003792">
    <property type="entry name" value="PRK05380.1"/>
    <property type="match status" value="1"/>
</dbReference>
<dbReference type="NCBIfam" id="TIGR00337">
    <property type="entry name" value="PyrG"/>
    <property type="match status" value="1"/>
</dbReference>
<dbReference type="PANTHER" id="PTHR11550">
    <property type="entry name" value="CTP SYNTHASE"/>
    <property type="match status" value="1"/>
</dbReference>
<dbReference type="PANTHER" id="PTHR11550:SF0">
    <property type="entry name" value="CTP SYNTHASE-RELATED"/>
    <property type="match status" value="1"/>
</dbReference>
<dbReference type="Pfam" id="PF06418">
    <property type="entry name" value="CTP_synth_N"/>
    <property type="match status" value="1"/>
</dbReference>
<dbReference type="Pfam" id="PF00117">
    <property type="entry name" value="GATase"/>
    <property type="match status" value="1"/>
</dbReference>
<dbReference type="SUPFAM" id="SSF52317">
    <property type="entry name" value="Class I glutamine amidotransferase-like"/>
    <property type="match status" value="1"/>
</dbReference>
<dbReference type="SUPFAM" id="SSF52540">
    <property type="entry name" value="P-loop containing nucleoside triphosphate hydrolases"/>
    <property type="match status" value="1"/>
</dbReference>
<dbReference type="PROSITE" id="PS51273">
    <property type="entry name" value="GATASE_TYPE_1"/>
    <property type="match status" value="1"/>
</dbReference>
<accession>C0MFQ9</accession>
<gene>
    <name evidence="1" type="primary">pyrG</name>
    <name type="ordered locus">SZO_02530</name>
</gene>
<feature type="chain" id="PRO_1000214017" description="CTP synthase">
    <location>
        <begin position="1"/>
        <end position="537"/>
    </location>
</feature>
<feature type="domain" description="Glutamine amidotransferase type-1" evidence="1">
    <location>
        <begin position="292"/>
        <end position="535"/>
    </location>
</feature>
<feature type="region of interest" description="Amidoligase domain" evidence="1">
    <location>
        <begin position="1"/>
        <end position="267"/>
    </location>
</feature>
<feature type="active site" description="Nucleophile; for glutamine hydrolysis" evidence="1">
    <location>
        <position position="381"/>
    </location>
</feature>
<feature type="active site" evidence="1">
    <location>
        <position position="508"/>
    </location>
</feature>
<feature type="active site" evidence="1">
    <location>
        <position position="510"/>
    </location>
</feature>
<feature type="binding site" evidence="1">
    <location>
        <position position="13"/>
    </location>
    <ligand>
        <name>CTP</name>
        <dbReference type="ChEBI" id="CHEBI:37563"/>
        <note>allosteric inhibitor</note>
    </ligand>
</feature>
<feature type="binding site" evidence="1">
    <location>
        <position position="13"/>
    </location>
    <ligand>
        <name>UTP</name>
        <dbReference type="ChEBI" id="CHEBI:46398"/>
    </ligand>
</feature>
<feature type="binding site" evidence="1">
    <location>
        <begin position="14"/>
        <end position="19"/>
    </location>
    <ligand>
        <name>ATP</name>
        <dbReference type="ChEBI" id="CHEBI:30616"/>
    </ligand>
</feature>
<feature type="binding site" evidence="1">
    <location>
        <position position="54"/>
    </location>
    <ligand>
        <name>L-glutamine</name>
        <dbReference type="ChEBI" id="CHEBI:58359"/>
    </ligand>
</feature>
<feature type="binding site" evidence="1">
    <location>
        <position position="71"/>
    </location>
    <ligand>
        <name>ATP</name>
        <dbReference type="ChEBI" id="CHEBI:30616"/>
    </ligand>
</feature>
<feature type="binding site" evidence="1">
    <location>
        <position position="71"/>
    </location>
    <ligand>
        <name>Mg(2+)</name>
        <dbReference type="ChEBI" id="CHEBI:18420"/>
    </ligand>
</feature>
<feature type="binding site" evidence="1">
    <location>
        <position position="141"/>
    </location>
    <ligand>
        <name>Mg(2+)</name>
        <dbReference type="ChEBI" id="CHEBI:18420"/>
    </ligand>
</feature>
<feature type="binding site" evidence="1">
    <location>
        <begin position="148"/>
        <end position="150"/>
    </location>
    <ligand>
        <name>CTP</name>
        <dbReference type="ChEBI" id="CHEBI:37563"/>
        <note>allosteric inhibitor</note>
    </ligand>
</feature>
<feature type="binding site" evidence="1">
    <location>
        <begin position="188"/>
        <end position="193"/>
    </location>
    <ligand>
        <name>CTP</name>
        <dbReference type="ChEBI" id="CHEBI:37563"/>
        <note>allosteric inhibitor</note>
    </ligand>
</feature>
<feature type="binding site" evidence="1">
    <location>
        <begin position="188"/>
        <end position="193"/>
    </location>
    <ligand>
        <name>UTP</name>
        <dbReference type="ChEBI" id="CHEBI:46398"/>
    </ligand>
</feature>
<feature type="binding site" evidence="1">
    <location>
        <position position="224"/>
    </location>
    <ligand>
        <name>CTP</name>
        <dbReference type="ChEBI" id="CHEBI:37563"/>
        <note>allosteric inhibitor</note>
    </ligand>
</feature>
<feature type="binding site" evidence="1">
    <location>
        <position position="224"/>
    </location>
    <ligand>
        <name>UTP</name>
        <dbReference type="ChEBI" id="CHEBI:46398"/>
    </ligand>
</feature>
<feature type="binding site" evidence="1">
    <location>
        <begin position="240"/>
        <end position="242"/>
    </location>
    <ligand>
        <name>ATP</name>
        <dbReference type="ChEBI" id="CHEBI:30616"/>
    </ligand>
</feature>
<feature type="binding site" evidence="1">
    <location>
        <position position="354"/>
    </location>
    <ligand>
        <name>L-glutamine</name>
        <dbReference type="ChEBI" id="CHEBI:58359"/>
    </ligand>
</feature>
<feature type="binding site" evidence="1">
    <location>
        <begin position="382"/>
        <end position="385"/>
    </location>
    <ligand>
        <name>L-glutamine</name>
        <dbReference type="ChEBI" id="CHEBI:58359"/>
    </ligand>
</feature>
<feature type="binding site" evidence="1">
    <location>
        <position position="405"/>
    </location>
    <ligand>
        <name>L-glutamine</name>
        <dbReference type="ChEBI" id="CHEBI:58359"/>
    </ligand>
</feature>
<feature type="binding site" evidence="1">
    <location>
        <position position="463"/>
    </location>
    <ligand>
        <name>L-glutamine</name>
        <dbReference type="ChEBI" id="CHEBI:58359"/>
    </ligand>
</feature>
<evidence type="ECO:0000255" key="1">
    <source>
        <dbReference type="HAMAP-Rule" id="MF_01227"/>
    </source>
</evidence>
<name>PYRG_STRS7</name>
<organism>
    <name type="scientific">Streptococcus equi subsp. zooepidemicus (strain H70)</name>
    <dbReference type="NCBI Taxonomy" id="553483"/>
    <lineage>
        <taxon>Bacteria</taxon>
        <taxon>Bacillati</taxon>
        <taxon>Bacillota</taxon>
        <taxon>Bacilli</taxon>
        <taxon>Lactobacillales</taxon>
        <taxon>Streptococcaceae</taxon>
        <taxon>Streptococcus</taxon>
    </lineage>
</organism>
<keyword id="KW-0067">ATP-binding</keyword>
<keyword id="KW-0315">Glutamine amidotransferase</keyword>
<keyword id="KW-0436">Ligase</keyword>
<keyword id="KW-0460">Magnesium</keyword>
<keyword id="KW-0479">Metal-binding</keyword>
<keyword id="KW-0547">Nucleotide-binding</keyword>
<keyword id="KW-0665">Pyrimidine biosynthesis</keyword>